<gene>
    <name evidence="8" type="primary">RragB</name>
</gene>
<feature type="chain" id="PRO_0000239950" description="Ras-related GTP-binding protein B">
    <location>
        <begin position="1"/>
        <end position="374"/>
    </location>
</feature>
<feature type="region of interest" description="Disordered" evidence="3">
    <location>
        <begin position="1"/>
        <end position="30"/>
    </location>
</feature>
<feature type="compositionally biased region" description="Basic and acidic residues" evidence="3">
    <location>
        <begin position="1"/>
        <end position="15"/>
    </location>
</feature>
<feature type="binding site" evidence="2">
    <location>
        <position position="49"/>
    </location>
    <ligand>
        <name>GTP</name>
        <dbReference type="ChEBI" id="CHEBI:37565"/>
    </ligand>
</feature>
<feature type="binding site" evidence="2">
    <location>
        <position position="50"/>
    </location>
    <ligand>
        <name>GDP</name>
        <dbReference type="ChEBI" id="CHEBI:58189"/>
    </ligand>
</feature>
<feature type="binding site" evidence="2">
    <location>
        <position position="50"/>
    </location>
    <ligand>
        <name>GTP</name>
        <dbReference type="ChEBI" id="CHEBI:37565"/>
    </ligand>
</feature>
<feature type="binding site" evidence="2">
    <location>
        <position position="51"/>
    </location>
    <ligand>
        <name>GDP</name>
        <dbReference type="ChEBI" id="CHEBI:58189"/>
    </ligand>
</feature>
<feature type="binding site" evidence="2">
    <location>
        <position position="52"/>
    </location>
    <ligand>
        <name>GDP</name>
        <dbReference type="ChEBI" id="CHEBI:58189"/>
    </ligand>
</feature>
<feature type="binding site" evidence="2">
    <location>
        <position position="52"/>
    </location>
    <ligand>
        <name>GTP</name>
        <dbReference type="ChEBI" id="CHEBI:37565"/>
    </ligand>
</feature>
<feature type="binding site" evidence="2">
    <location>
        <position position="53"/>
    </location>
    <ligand>
        <name>GDP</name>
        <dbReference type="ChEBI" id="CHEBI:58189"/>
    </ligand>
</feature>
<feature type="binding site" evidence="2">
    <location>
        <position position="53"/>
    </location>
    <ligand>
        <name>GTP</name>
        <dbReference type="ChEBI" id="CHEBI:37565"/>
    </ligand>
</feature>
<feature type="binding site" evidence="2">
    <location>
        <position position="54"/>
    </location>
    <ligand>
        <name>GDP</name>
        <dbReference type="ChEBI" id="CHEBI:58189"/>
    </ligand>
</feature>
<feature type="binding site" evidence="2">
    <location>
        <position position="54"/>
    </location>
    <ligand>
        <name>GTP</name>
        <dbReference type="ChEBI" id="CHEBI:37565"/>
    </ligand>
</feature>
<feature type="binding site" evidence="2">
    <location>
        <position position="55"/>
    </location>
    <ligand>
        <name>GDP</name>
        <dbReference type="ChEBI" id="CHEBI:58189"/>
    </ligand>
</feature>
<feature type="binding site" evidence="2">
    <location>
        <position position="55"/>
    </location>
    <ligand>
        <name>GTP</name>
        <dbReference type="ChEBI" id="CHEBI:37565"/>
    </ligand>
</feature>
<feature type="binding site" evidence="2">
    <location>
        <position position="69"/>
    </location>
    <ligand>
        <name>GDP</name>
        <dbReference type="ChEBI" id="CHEBI:58189"/>
    </ligand>
</feature>
<feature type="binding site" evidence="2">
    <location>
        <position position="69"/>
    </location>
    <ligand>
        <name>GTP</name>
        <dbReference type="ChEBI" id="CHEBI:37565"/>
    </ligand>
</feature>
<feature type="binding site" evidence="2">
    <location>
        <position position="75"/>
    </location>
    <ligand>
        <name>GDP</name>
        <dbReference type="ChEBI" id="CHEBI:58189"/>
    </ligand>
</feature>
<feature type="binding site" evidence="2">
    <location>
        <position position="75"/>
    </location>
    <ligand>
        <name>GTP</name>
        <dbReference type="ChEBI" id="CHEBI:37565"/>
    </ligand>
</feature>
<feature type="binding site" evidence="2">
    <location>
        <position position="126"/>
    </location>
    <ligand>
        <name>GTP</name>
        <dbReference type="ChEBI" id="CHEBI:37565"/>
    </ligand>
</feature>
<feature type="binding site" evidence="2">
    <location>
        <position position="188"/>
    </location>
    <ligand>
        <name>GDP</name>
        <dbReference type="ChEBI" id="CHEBI:58189"/>
    </ligand>
</feature>
<feature type="binding site" evidence="2">
    <location>
        <position position="188"/>
    </location>
    <ligand>
        <name>GTP</name>
        <dbReference type="ChEBI" id="CHEBI:37565"/>
    </ligand>
</feature>
<feature type="binding site" evidence="2">
    <location>
        <position position="191"/>
    </location>
    <ligand>
        <name>GDP</name>
        <dbReference type="ChEBI" id="CHEBI:58189"/>
    </ligand>
</feature>
<feature type="binding site" evidence="2">
    <location>
        <position position="209"/>
    </location>
    <ligand>
        <name>GDP</name>
        <dbReference type="ChEBI" id="CHEBI:58189"/>
    </ligand>
</feature>
<feature type="binding site" evidence="2">
    <location>
        <position position="225"/>
    </location>
    <ligand>
        <name>GDP</name>
        <dbReference type="ChEBI" id="CHEBI:58189"/>
    </ligand>
</feature>
<feature type="binding site" evidence="2">
    <location>
        <position position="225"/>
    </location>
    <ligand>
        <name>GTP</name>
        <dbReference type="ChEBI" id="CHEBI:37565"/>
    </ligand>
</feature>
<feature type="modified residue" description="N-acetylmethionine" evidence="1">
    <location>
        <position position="1"/>
    </location>
</feature>
<feature type="cross-link" description="Glycyl lysine isopeptide (Lys-Gly) (interchain with G-Cter in ubiquitin)" evidence="2">
    <location>
        <position position="203"/>
    </location>
</feature>
<feature type="cross-link" description="Glycyl lysine isopeptide (Lys-Gly) (interchain with G-Cter in ubiquitin)" evidence="2">
    <location>
        <position position="281"/>
    </location>
</feature>
<feature type="cross-link" description="Glycyl lysine isopeptide (Lys-Gly) (interchain with G-Cter in ubiquitin)" evidence="2">
    <location>
        <position position="291"/>
    </location>
</feature>
<feature type="cross-link" description="Glycyl lysine isopeptide (Lys-Gly) (interchain with G-Cter in ubiquitin)" evidence="2">
    <location>
        <position position="305"/>
    </location>
</feature>
<feature type="splice variant" id="VSP_052074" description="In isoform 2." evidence="5">
    <location>
        <begin position="77"/>
        <end position="104"/>
    </location>
</feature>
<feature type="sequence conflict" description="In Ref. 2; AAH78760." evidence="6" ref="2">
    <original>D</original>
    <variation>V</variation>
    <location>
        <position position="262"/>
    </location>
</feature>
<accession>Q63487</accession>
<accession>Q6AZ37</accession>
<evidence type="ECO:0000250" key="1">
    <source>
        <dbReference type="UniProtKB" id="Q5VZM2"/>
    </source>
</evidence>
<evidence type="ECO:0000250" key="2">
    <source>
        <dbReference type="UniProtKB" id="Q7L523"/>
    </source>
</evidence>
<evidence type="ECO:0000256" key="3">
    <source>
        <dbReference type="SAM" id="MobiDB-lite"/>
    </source>
</evidence>
<evidence type="ECO:0000269" key="4">
    <source>
    </source>
</evidence>
<evidence type="ECO:0000303" key="5">
    <source>
    </source>
</evidence>
<evidence type="ECO:0000305" key="6"/>
<evidence type="ECO:0000312" key="7">
    <source>
        <dbReference type="EMBL" id="CAA59467.1"/>
    </source>
</evidence>
<evidence type="ECO:0000312" key="8">
    <source>
        <dbReference type="RGD" id="619805"/>
    </source>
</evidence>
<sequence length="374" mass="43191">MEESDSEKKTEKENVGPKVEPPLGEPEGSLGWAMPNAAMKKKVLLMGKSGSGKTSMRSIIFANYIARDTRRLGATILDRIHSLQINSSLSTYSLVDSVGNTKTFDVEHSHVRFLGNLVLNLWDCGGQDTFMENYFTSQRDNIFRNVEVLIYVFDVESRELEKDMHYYQSCLEAILQNSPEAKIFCLVHKMDLVQEDQRDLIFKEREEDLRRLSRPLECSCFRTSIWDETLYKAWSSIVYQLIPNVQQLEMNLRNFAEIIEADEVLLFERATFLVISHYQCKEQRDAHRFEKISNIIKQFKLSCSKLAASFQSMEVRNSNFAAFIDIFTSNTYVMVVMSDPSIPSAATLINIRNARKHFEKLERVDGPKQCLLMR</sequence>
<reference evidence="6 7" key="1">
    <citation type="journal article" date="1995" name="J. Biol. Chem.">
        <title>Cloning of a novel family of mammalian GTP-binding proteins (RagA, RagBs, RagBl) with remote similarity to the Ras-related GTPases.</title>
        <authorList>
            <person name="Schuermann A."/>
            <person name="Brauers A."/>
            <person name="Massmann S."/>
            <person name="Becker W."/>
            <person name="Joost H.-G."/>
        </authorList>
    </citation>
    <scope>NUCLEOTIDE SEQUENCE [MRNA] (ISOFORMS 1 AND 2)</scope>
    <scope>ALTERNATIVE SPLICING</scope>
    <scope>TISSUE SPECIFICITY</scope>
    <scope>GTP-BINDING</scope>
    <source>
        <strain evidence="7">Sprague-Dawley</strain>
        <tissue evidence="7">Brain</tissue>
    </source>
</reference>
<reference key="2">
    <citation type="journal article" date="2004" name="Genome Res.">
        <title>The status, quality, and expansion of the NIH full-length cDNA project: the Mammalian Gene Collection (MGC).</title>
        <authorList>
            <consortium name="The MGC Project Team"/>
        </authorList>
    </citation>
    <scope>NUCLEOTIDE SEQUENCE [LARGE SCALE MRNA] (ISOFORM 1)</scope>
    <source>
        <tissue>Brain</tissue>
        <tissue>Lung</tissue>
    </source>
</reference>
<organism>
    <name type="scientific">Rattus norvegicus</name>
    <name type="common">Rat</name>
    <dbReference type="NCBI Taxonomy" id="10116"/>
    <lineage>
        <taxon>Eukaryota</taxon>
        <taxon>Metazoa</taxon>
        <taxon>Chordata</taxon>
        <taxon>Craniata</taxon>
        <taxon>Vertebrata</taxon>
        <taxon>Euteleostomi</taxon>
        <taxon>Mammalia</taxon>
        <taxon>Eutheria</taxon>
        <taxon>Euarchontoglires</taxon>
        <taxon>Glires</taxon>
        <taxon>Rodentia</taxon>
        <taxon>Myomorpha</taxon>
        <taxon>Muroidea</taxon>
        <taxon>Muridae</taxon>
        <taxon>Murinae</taxon>
        <taxon>Rattus</taxon>
    </lineage>
</organism>
<keyword id="KW-0007">Acetylation</keyword>
<keyword id="KW-0025">Alternative splicing</keyword>
<keyword id="KW-0963">Cytoplasm</keyword>
<keyword id="KW-0342">GTP-binding</keyword>
<keyword id="KW-0378">Hydrolase</keyword>
<keyword id="KW-1017">Isopeptide bond</keyword>
<keyword id="KW-0458">Lysosome</keyword>
<keyword id="KW-0472">Membrane</keyword>
<keyword id="KW-0547">Nucleotide-binding</keyword>
<keyword id="KW-1185">Reference proteome</keyword>
<keyword id="KW-0832">Ubl conjugation</keyword>
<dbReference type="EC" id="3.6.5.-" evidence="1"/>
<dbReference type="EMBL" id="X85184">
    <property type="protein sequence ID" value="CAA59467.1"/>
    <property type="molecule type" value="mRNA"/>
</dbReference>
<dbReference type="EMBL" id="BC078760">
    <property type="protein sequence ID" value="AAH78760.1"/>
    <property type="molecule type" value="mRNA"/>
</dbReference>
<dbReference type="EMBL" id="BC087698">
    <property type="protein sequence ID" value="AAH87698.1"/>
    <property type="molecule type" value="mRNA"/>
</dbReference>
<dbReference type="RefSeq" id="NP_446424.1">
    <molecule id="Q63487-1"/>
    <property type="nucleotide sequence ID" value="NM_053972.2"/>
</dbReference>
<dbReference type="RefSeq" id="XP_006256837.1">
    <molecule id="Q63487-2"/>
    <property type="nucleotide sequence ID" value="XM_006256775.5"/>
</dbReference>
<dbReference type="RefSeq" id="XP_017457764.1">
    <property type="nucleotide sequence ID" value="XM_017602275.1"/>
</dbReference>
<dbReference type="SMR" id="Q63487"/>
<dbReference type="FunCoup" id="Q63487">
    <property type="interactions" value="2608"/>
</dbReference>
<dbReference type="STRING" id="10116.ENSRNOP00000004235"/>
<dbReference type="PhosphoSitePlus" id="Q63487"/>
<dbReference type="PaxDb" id="10116-ENSRNOP00000004235"/>
<dbReference type="Ensembl" id="ENSRNOT00000004235.7">
    <molecule id="Q63487-1"/>
    <property type="protein sequence ID" value="ENSRNOP00000004235.3"/>
    <property type="gene ID" value="ENSRNOG00000062421.1"/>
</dbReference>
<dbReference type="GeneID" id="117043"/>
<dbReference type="KEGG" id="rno:117043"/>
<dbReference type="UCSC" id="RGD:619805">
    <molecule id="Q63487-1"/>
    <property type="organism name" value="rat"/>
</dbReference>
<dbReference type="AGR" id="RGD:619805"/>
<dbReference type="CTD" id="10325"/>
<dbReference type="RGD" id="619805">
    <property type="gene designation" value="RragB"/>
</dbReference>
<dbReference type="eggNOG" id="KOG3886">
    <property type="taxonomic scope" value="Eukaryota"/>
</dbReference>
<dbReference type="GeneTree" id="ENSGT00950000183031"/>
<dbReference type="HOGENOM" id="CLU_044099_1_1_1"/>
<dbReference type="InParanoid" id="Q63487"/>
<dbReference type="OMA" id="AFKHACS"/>
<dbReference type="OrthoDB" id="10020193at2759"/>
<dbReference type="PhylomeDB" id="Q63487"/>
<dbReference type="TreeFam" id="TF300616"/>
<dbReference type="Reactome" id="R-RNO-1632852">
    <property type="pathway name" value="Macroautophagy"/>
</dbReference>
<dbReference type="Reactome" id="R-RNO-165159">
    <property type="pathway name" value="MTOR signalling"/>
</dbReference>
<dbReference type="Reactome" id="R-RNO-166208">
    <property type="pathway name" value="mTORC1-mediated signalling"/>
</dbReference>
<dbReference type="Reactome" id="R-RNO-380972">
    <property type="pathway name" value="Energy dependent regulation of mTOR by LKB1-AMPK"/>
</dbReference>
<dbReference type="Reactome" id="R-RNO-5628897">
    <property type="pathway name" value="TP53 Regulates Metabolic Genes"/>
</dbReference>
<dbReference type="Reactome" id="R-RNO-8943724">
    <property type="pathway name" value="Regulation of PTEN gene transcription"/>
</dbReference>
<dbReference type="Reactome" id="R-RNO-9639288">
    <property type="pathway name" value="Amino acids regulate mTORC1"/>
</dbReference>
<dbReference type="PRO" id="PR:Q63487"/>
<dbReference type="Proteomes" id="UP000002494">
    <property type="component" value="Chromosome X"/>
</dbReference>
<dbReference type="Bgee" id="ENSRNOG00000003160">
    <property type="expression patterns" value="Expressed in cerebellum and 15 other cell types or tissues"/>
</dbReference>
<dbReference type="GO" id="GO:0005737">
    <property type="term" value="C:cytoplasm"/>
    <property type="evidence" value="ECO:0000250"/>
    <property type="project" value="UniProtKB"/>
</dbReference>
<dbReference type="GO" id="GO:1990131">
    <property type="term" value="C:Gtr1-Gtr2 GTPase complex"/>
    <property type="evidence" value="ECO:0000318"/>
    <property type="project" value="GO_Central"/>
</dbReference>
<dbReference type="GO" id="GO:0005765">
    <property type="term" value="C:lysosomal membrane"/>
    <property type="evidence" value="ECO:0007669"/>
    <property type="project" value="UniProtKB-SubCell"/>
</dbReference>
<dbReference type="GO" id="GO:0005764">
    <property type="term" value="C:lysosome"/>
    <property type="evidence" value="ECO:0000250"/>
    <property type="project" value="UniProtKB"/>
</dbReference>
<dbReference type="GO" id="GO:0005634">
    <property type="term" value="C:nucleus"/>
    <property type="evidence" value="ECO:0000318"/>
    <property type="project" value="GO_Central"/>
</dbReference>
<dbReference type="GO" id="GO:0005525">
    <property type="term" value="F:GTP binding"/>
    <property type="evidence" value="ECO:0000314"/>
    <property type="project" value="RGD"/>
</dbReference>
<dbReference type="GO" id="GO:0003924">
    <property type="term" value="F:GTPase activity"/>
    <property type="evidence" value="ECO:0000318"/>
    <property type="project" value="GO_Central"/>
</dbReference>
<dbReference type="GO" id="GO:0051020">
    <property type="term" value="F:GTPase binding"/>
    <property type="evidence" value="ECO:0000266"/>
    <property type="project" value="RGD"/>
</dbReference>
<dbReference type="GO" id="GO:0032561">
    <property type="term" value="F:guanyl ribonucleotide binding"/>
    <property type="evidence" value="ECO:0000250"/>
    <property type="project" value="UniProtKB"/>
</dbReference>
<dbReference type="GO" id="GO:0034198">
    <property type="term" value="P:cellular response to amino acid starvation"/>
    <property type="evidence" value="ECO:0000266"/>
    <property type="project" value="RGD"/>
</dbReference>
<dbReference type="GO" id="GO:0071230">
    <property type="term" value="P:cellular response to amino acid stimulus"/>
    <property type="evidence" value="ECO:0000250"/>
    <property type="project" value="UniProtKB"/>
</dbReference>
<dbReference type="GO" id="GO:1990253">
    <property type="term" value="P:cellular response to leucine starvation"/>
    <property type="evidence" value="ECO:0000266"/>
    <property type="project" value="RGD"/>
</dbReference>
<dbReference type="GO" id="GO:0009267">
    <property type="term" value="P:cellular response to starvation"/>
    <property type="evidence" value="ECO:0000318"/>
    <property type="project" value="GO_Central"/>
</dbReference>
<dbReference type="GO" id="GO:0010507">
    <property type="term" value="P:negative regulation of autophagy"/>
    <property type="evidence" value="ECO:0000318"/>
    <property type="project" value="GO_Central"/>
</dbReference>
<dbReference type="GO" id="GO:0032008">
    <property type="term" value="P:positive regulation of TOR signaling"/>
    <property type="evidence" value="ECO:0000250"/>
    <property type="project" value="UniProtKB"/>
</dbReference>
<dbReference type="GO" id="GO:1904263">
    <property type="term" value="P:positive regulation of TORC1 signaling"/>
    <property type="evidence" value="ECO:0000266"/>
    <property type="project" value="RGD"/>
</dbReference>
<dbReference type="GO" id="GO:0008104">
    <property type="term" value="P:protein localization"/>
    <property type="evidence" value="ECO:0000250"/>
    <property type="project" value="UniProtKB"/>
</dbReference>
<dbReference type="GO" id="GO:0032006">
    <property type="term" value="P:regulation of TOR signaling"/>
    <property type="evidence" value="ECO:0000266"/>
    <property type="project" value="RGD"/>
</dbReference>
<dbReference type="CDD" id="cd11384">
    <property type="entry name" value="RagA_like"/>
    <property type="match status" value="1"/>
</dbReference>
<dbReference type="FunFam" id="3.30.450.190:FF:000002">
    <property type="entry name" value="Ras-related GTP-binding protein A"/>
    <property type="match status" value="1"/>
</dbReference>
<dbReference type="FunFam" id="3.40.50.300:FF:000276">
    <property type="entry name" value="Ras-related GTP-binding protein A"/>
    <property type="match status" value="1"/>
</dbReference>
<dbReference type="Gene3D" id="3.30.450.190">
    <property type="match status" value="1"/>
</dbReference>
<dbReference type="Gene3D" id="3.40.50.300">
    <property type="entry name" value="P-loop containing nucleotide triphosphate hydrolases"/>
    <property type="match status" value="1"/>
</dbReference>
<dbReference type="InterPro" id="IPR006762">
    <property type="entry name" value="Gtr1_RagA"/>
</dbReference>
<dbReference type="InterPro" id="IPR027417">
    <property type="entry name" value="P-loop_NTPase"/>
</dbReference>
<dbReference type="InterPro" id="IPR039397">
    <property type="entry name" value="RagA/B"/>
</dbReference>
<dbReference type="PANTHER" id="PTHR11259">
    <property type="entry name" value="RAS-RELATED GTP BINDING RAG/GTR YEAST"/>
    <property type="match status" value="1"/>
</dbReference>
<dbReference type="PANTHER" id="PTHR11259:SF4">
    <property type="entry name" value="RAS-RELATED GTP-BINDING PROTEIN B"/>
    <property type="match status" value="1"/>
</dbReference>
<dbReference type="Pfam" id="PF04670">
    <property type="entry name" value="Gtr1_RagA"/>
    <property type="match status" value="1"/>
</dbReference>
<dbReference type="SUPFAM" id="SSF52540">
    <property type="entry name" value="P-loop containing nucleoside triphosphate hydrolases"/>
    <property type="match status" value="1"/>
</dbReference>
<comment type="function">
    <text evidence="1">Guanine nucleotide-binding protein that plays a crucial role in the cellular response to amino acid availability through regulation of the mTORC1 signaling cascade. Forms heterodimeric Rag complexes with RagC/RRAGC or RagD/RRAGD and cycles between an inactive GDP-bound and an active GTP-bound form: RagB/RRAGB is in its active form when GTP-bound RagB/RRAGB forms a complex with GDP-bound RagC/RRAGC (or RagD/RRAGD) and in an inactive form when GDP-bound RagB/RRAGB heterodimerizes with GTP-bound RagC/RRAGC (or RagD/RRAGD). In its GTP-bound active form, promotes the recruitment of mTORC1 to the lysosomes and its subsequent activation by the GTPase RHEB. Involved in the RCC1/Ran-GTPase pathway.</text>
</comment>
<comment type="catalytic activity">
    <reaction evidence="1">
        <text>GTP + H2O = GDP + phosphate + H(+)</text>
        <dbReference type="Rhea" id="RHEA:19669"/>
        <dbReference type="ChEBI" id="CHEBI:15377"/>
        <dbReference type="ChEBI" id="CHEBI:15378"/>
        <dbReference type="ChEBI" id="CHEBI:37565"/>
        <dbReference type="ChEBI" id="CHEBI:43474"/>
        <dbReference type="ChEBI" id="CHEBI:58189"/>
    </reaction>
    <physiologicalReaction direction="left-to-right" evidence="1">
        <dbReference type="Rhea" id="RHEA:19670"/>
    </physiologicalReaction>
</comment>
<comment type="activity regulation">
    <text evidence="1">The activation of GTP-binding proteins is generally mediated by a guanine exchange factor (GEF), while inactivation through hydrolysis of bound GTP is catalyzed by a GTPase activating protein (GAP). The Ragulator complex functions as a GEF and promotes the active GTP-bound form. The GATOR1 complex functions as a GAP and stimulates RRAGB GTPase activity to turn it into its inactive GDP-bound form, preventing mTORC1 recruitment and activation.</text>
</comment>
<comment type="subunit">
    <text evidence="1 2">Interacts with RRAGC and RRAGD; heterodimerization stabilizes RRAG proteins. The GTP-bound form of RRAGB (in complex with the GDP-bound form of RRAGC or RRAGD) interacts with RPTOR, thereby promoting recruitment of mTORC1 to the lysosomes (By similarity). Component of the lysosomal folliculin complex (LFC), composed of FLCN, FNIP1 (or FNIP2), RagA/RRAGA or RagB/RRAGB GDP-bound, RagC/RRAGC or RagD/RRAGD GTP-bound, and Ragulator (By similarity). Interacts with SH3BP4; the interaction with this negative regulator is most probably direct, preferentially occurs with the inactive GDP-bound form of RRAGB, is negatively regulated by amino acids and prevents interaction with RPTOR. Interacts with the GATOR1 complex; inactivates RRAGB. The Rag heterodimer interacts with SLC38A9; the probable amino acid sensor. Interacts with SESN1, SESN2 and SESN3 (By similarity).</text>
</comment>
<comment type="subcellular location">
    <subcellularLocation>
        <location evidence="1">Cytoplasm</location>
    </subcellularLocation>
    <subcellularLocation>
        <location evidence="1">Lysosome membrane</location>
    </subcellularLocation>
    <text evidence="1">Recruited to the lysosome surface by the Ragulator complex.</text>
</comment>
<comment type="alternative products">
    <event type="alternative splicing"/>
    <isoform>
        <id>Q63487-1</id>
        <name evidence="5">1</name>
        <name evidence="5">Long</name>
        <sequence type="displayed"/>
    </isoform>
    <isoform>
        <id>Q63487-2</id>
        <name evidence="5">2</name>
        <name evidence="5">Short</name>
        <sequence type="described" ref="VSP_052074"/>
    </isoform>
</comment>
<comment type="tissue specificity">
    <text evidence="4">2 transcripts of 2.5 kb and 3.8 kb are expressed at low levels in brain, testis, adrenal gland and thymus.</text>
</comment>
<comment type="similarity">
    <text evidence="6">Belongs to the GTR/RAG GTP-binding protein family.</text>
</comment>
<comment type="caution">
    <text evidence="4">According to a report, has no detectable intrinsic GTPase activity.</text>
</comment>
<protein>
    <recommendedName>
        <fullName>Ras-related GTP-binding protein B</fullName>
        <shortName evidence="1">Rag B</shortName>
        <shortName evidence="5">RagB</shortName>
        <ecNumber evidence="1">3.6.5.-</ecNumber>
    </recommendedName>
</protein>
<proteinExistence type="evidence at protein level"/>
<name>RRAGB_RAT</name>